<name>TSAD_RHIE6</name>
<keyword id="KW-0012">Acyltransferase</keyword>
<keyword id="KW-0963">Cytoplasm</keyword>
<keyword id="KW-0408">Iron</keyword>
<keyword id="KW-0479">Metal-binding</keyword>
<keyword id="KW-0808">Transferase</keyword>
<keyword id="KW-0819">tRNA processing</keyword>
<reference key="1">
    <citation type="journal article" date="2010" name="Appl. Environ. Microbiol.">
        <title>Conserved symbiotic plasmid DNA sequences in the multireplicon pangenomic structure of Rhizobium etli.</title>
        <authorList>
            <person name="Gonzalez V."/>
            <person name="Acosta J.L."/>
            <person name="Santamaria R.I."/>
            <person name="Bustos P."/>
            <person name="Fernandez J.L."/>
            <person name="Hernandez Gonzalez I.L."/>
            <person name="Diaz R."/>
            <person name="Flores M."/>
            <person name="Palacios R."/>
            <person name="Mora J."/>
            <person name="Davila G."/>
        </authorList>
    </citation>
    <scope>NUCLEOTIDE SEQUENCE [LARGE SCALE GENOMIC DNA]</scope>
    <source>
        <strain>CIAT 652</strain>
    </source>
</reference>
<gene>
    <name evidence="1" type="primary">tsaD</name>
    <name type="synonym">gcp</name>
    <name type="ordered locus">RHECIAT_CH0004187</name>
</gene>
<comment type="function">
    <text evidence="1">Required for the formation of a threonylcarbamoyl group on adenosine at position 37 (t(6)A37) in tRNAs that read codons beginning with adenine. Is involved in the transfer of the threonylcarbamoyl moiety of threonylcarbamoyl-AMP (TC-AMP) to the N6 group of A37, together with TsaE and TsaB. TsaD likely plays a direct catalytic role in this reaction.</text>
</comment>
<comment type="catalytic activity">
    <reaction evidence="1">
        <text>L-threonylcarbamoyladenylate + adenosine(37) in tRNA = N(6)-L-threonylcarbamoyladenosine(37) in tRNA + AMP + H(+)</text>
        <dbReference type="Rhea" id="RHEA:37059"/>
        <dbReference type="Rhea" id="RHEA-COMP:10162"/>
        <dbReference type="Rhea" id="RHEA-COMP:10163"/>
        <dbReference type="ChEBI" id="CHEBI:15378"/>
        <dbReference type="ChEBI" id="CHEBI:73682"/>
        <dbReference type="ChEBI" id="CHEBI:74411"/>
        <dbReference type="ChEBI" id="CHEBI:74418"/>
        <dbReference type="ChEBI" id="CHEBI:456215"/>
        <dbReference type="EC" id="2.3.1.234"/>
    </reaction>
</comment>
<comment type="cofactor">
    <cofactor evidence="1">
        <name>Fe(2+)</name>
        <dbReference type="ChEBI" id="CHEBI:29033"/>
    </cofactor>
    <text evidence="1">Binds 1 Fe(2+) ion per subunit.</text>
</comment>
<comment type="subcellular location">
    <subcellularLocation>
        <location evidence="1">Cytoplasm</location>
    </subcellularLocation>
</comment>
<comment type="similarity">
    <text evidence="1">Belongs to the KAE1 / TsaD family.</text>
</comment>
<feature type="chain" id="PRO_1000146011" description="tRNA N6-adenosine threonylcarbamoyltransferase">
    <location>
        <begin position="1"/>
        <end position="365"/>
    </location>
</feature>
<feature type="binding site" evidence="1">
    <location>
        <position position="119"/>
    </location>
    <ligand>
        <name>Fe cation</name>
        <dbReference type="ChEBI" id="CHEBI:24875"/>
    </ligand>
</feature>
<feature type="binding site" evidence="1">
    <location>
        <position position="123"/>
    </location>
    <ligand>
        <name>Fe cation</name>
        <dbReference type="ChEBI" id="CHEBI:24875"/>
    </ligand>
</feature>
<feature type="binding site" evidence="1">
    <location>
        <begin position="141"/>
        <end position="145"/>
    </location>
    <ligand>
        <name>substrate</name>
    </ligand>
</feature>
<feature type="binding site" evidence="1">
    <location>
        <position position="174"/>
    </location>
    <ligand>
        <name>substrate</name>
    </ligand>
</feature>
<feature type="binding site" evidence="1">
    <location>
        <position position="187"/>
    </location>
    <ligand>
        <name>substrate</name>
    </ligand>
</feature>
<feature type="binding site" evidence="1">
    <location>
        <position position="288"/>
    </location>
    <ligand>
        <name>substrate</name>
    </ligand>
</feature>
<feature type="binding site" evidence="1">
    <location>
        <position position="316"/>
    </location>
    <ligand>
        <name>Fe cation</name>
        <dbReference type="ChEBI" id="CHEBI:24875"/>
    </ligand>
</feature>
<sequence length="365" mass="38697">MVPFPRILGIETSCDETAAAVVERDAEGHSRILSDVVLSQLDEHSAYGGVVPEIAARAHVEALDELIEEALMRANVSLADVDAIAATSGPGLIGGLLVGLMTGKAIAKAAGKPLYAVNHLEGHALTARLTDGLSFPYLMLLVSGGHTQLILVRGVGDYERWGTTIDDALGEAFDKTAKLLGLPYPGGPAVERMARDGNAGRFDFPRPLVGEARLDFSFSGLKTAVRLAAQEIAPLSDQDVADICASFQRAISRTLKDRIGRGLQRFKREFPSIGETPALVVAGGVAANLELRATLQGLCDKNGFRFIAPPLSLCTDNAVMIAWAGLERMAIGVAPDALDVQPRSRWPLDANAERLIGFGKRGAKA</sequence>
<accession>B3PQA4</accession>
<protein>
    <recommendedName>
        <fullName evidence="1">tRNA N6-adenosine threonylcarbamoyltransferase</fullName>
        <ecNumber evidence="1">2.3.1.234</ecNumber>
    </recommendedName>
    <alternativeName>
        <fullName evidence="1">N6-L-threonylcarbamoyladenine synthase</fullName>
        <shortName evidence="1">t(6)A synthase</shortName>
    </alternativeName>
    <alternativeName>
        <fullName evidence="1">t(6)A37 threonylcarbamoyladenosine biosynthesis protein TsaD</fullName>
    </alternativeName>
    <alternativeName>
        <fullName evidence="1">tRNA threonylcarbamoyladenosine biosynthesis protein TsaD</fullName>
    </alternativeName>
</protein>
<dbReference type="EC" id="2.3.1.234" evidence="1"/>
<dbReference type="EMBL" id="CP001074">
    <property type="protein sequence ID" value="ACE93116.1"/>
    <property type="molecule type" value="Genomic_DNA"/>
</dbReference>
<dbReference type="SMR" id="B3PQA4"/>
<dbReference type="KEGG" id="rec:RHECIAT_CH0004187"/>
<dbReference type="eggNOG" id="COG0533">
    <property type="taxonomic scope" value="Bacteria"/>
</dbReference>
<dbReference type="HOGENOM" id="CLU_023208_0_2_5"/>
<dbReference type="Proteomes" id="UP000008817">
    <property type="component" value="Chromosome"/>
</dbReference>
<dbReference type="GO" id="GO:0005737">
    <property type="term" value="C:cytoplasm"/>
    <property type="evidence" value="ECO:0007669"/>
    <property type="project" value="UniProtKB-SubCell"/>
</dbReference>
<dbReference type="GO" id="GO:0005506">
    <property type="term" value="F:iron ion binding"/>
    <property type="evidence" value="ECO:0007669"/>
    <property type="project" value="UniProtKB-UniRule"/>
</dbReference>
<dbReference type="GO" id="GO:0061711">
    <property type="term" value="F:N(6)-L-threonylcarbamoyladenine synthase activity"/>
    <property type="evidence" value="ECO:0007669"/>
    <property type="project" value="UniProtKB-EC"/>
</dbReference>
<dbReference type="GO" id="GO:0002949">
    <property type="term" value="P:tRNA threonylcarbamoyladenosine modification"/>
    <property type="evidence" value="ECO:0007669"/>
    <property type="project" value="UniProtKB-UniRule"/>
</dbReference>
<dbReference type="CDD" id="cd24133">
    <property type="entry name" value="ASKHA_NBD_TsaD_bac"/>
    <property type="match status" value="1"/>
</dbReference>
<dbReference type="FunFam" id="3.30.420.40:FF:000012">
    <property type="entry name" value="tRNA N6-adenosine threonylcarbamoyltransferase"/>
    <property type="match status" value="1"/>
</dbReference>
<dbReference type="FunFam" id="3.30.420.40:FF:000040">
    <property type="entry name" value="tRNA N6-adenosine threonylcarbamoyltransferase"/>
    <property type="match status" value="1"/>
</dbReference>
<dbReference type="Gene3D" id="3.30.420.40">
    <property type="match status" value="2"/>
</dbReference>
<dbReference type="HAMAP" id="MF_01445">
    <property type="entry name" value="TsaD"/>
    <property type="match status" value="1"/>
</dbReference>
<dbReference type="InterPro" id="IPR043129">
    <property type="entry name" value="ATPase_NBD"/>
</dbReference>
<dbReference type="InterPro" id="IPR000905">
    <property type="entry name" value="Gcp-like_dom"/>
</dbReference>
<dbReference type="InterPro" id="IPR017861">
    <property type="entry name" value="KAE1/TsaD"/>
</dbReference>
<dbReference type="InterPro" id="IPR022450">
    <property type="entry name" value="TsaD"/>
</dbReference>
<dbReference type="NCBIfam" id="TIGR00329">
    <property type="entry name" value="gcp_kae1"/>
    <property type="match status" value="1"/>
</dbReference>
<dbReference type="NCBIfam" id="TIGR03723">
    <property type="entry name" value="T6A_TsaD_YgjD"/>
    <property type="match status" value="1"/>
</dbReference>
<dbReference type="PANTHER" id="PTHR11735">
    <property type="entry name" value="TRNA N6-ADENOSINE THREONYLCARBAMOYLTRANSFERASE"/>
    <property type="match status" value="1"/>
</dbReference>
<dbReference type="PANTHER" id="PTHR11735:SF6">
    <property type="entry name" value="TRNA N6-ADENOSINE THREONYLCARBAMOYLTRANSFERASE, MITOCHONDRIAL"/>
    <property type="match status" value="1"/>
</dbReference>
<dbReference type="Pfam" id="PF00814">
    <property type="entry name" value="TsaD"/>
    <property type="match status" value="1"/>
</dbReference>
<dbReference type="PRINTS" id="PR00789">
    <property type="entry name" value="OSIALOPTASE"/>
</dbReference>
<dbReference type="SUPFAM" id="SSF53067">
    <property type="entry name" value="Actin-like ATPase domain"/>
    <property type="match status" value="2"/>
</dbReference>
<evidence type="ECO:0000255" key="1">
    <source>
        <dbReference type="HAMAP-Rule" id="MF_01445"/>
    </source>
</evidence>
<proteinExistence type="inferred from homology"/>
<organism>
    <name type="scientific">Rhizobium etli (strain CIAT 652)</name>
    <dbReference type="NCBI Taxonomy" id="491916"/>
    <lineage>
        <taxon>Bacteria</taxon>
        <taxon>Pseudomonadati</taxon>
        <taxon>Pseudomonadota</taxon>
        <taxon>Alphaproteobacteria</taxon>
        <taxon>Hyphomicrobiales</taxon>
        <taxon>Rhizobiaceae</taxon>
        <taxon>Rhizobium/Agrobacterium group</taxon>
        <taxon>Rhizobium</taxon>
    </lineage>
</organism>